<name>B3AT_ONCMY</name>
<organism>
    <name type="scientific">Oncorhynchus mykiss</name>
    <name type="common">Rainbow trout</name>
    <name type="synonym">Salmo gairdneri</name>
    <dbReference type="NCBI Taxonomy" id="8022"/>
    <lineage>
        <taxon>Eukaryota</taxon>
        <taxon>Metazoa</taxon>
        <taxon>Chordata</taxon>
        <taxon>Craniata</taxon>
        <taxon>Vertebrata</taxon>
        <taxon>Euteleostomi</taxon>
        <taxon>Actinopterygii</taxon>
        <taxon>Neopterygii</taxon>
        <taxon>Teleostei</taxon>
        <taxon>Protacanthopterygii</taxon>
        <taxon>Salmoniformes</taxon>
        <taxon>Salmonidae</taxon>
        <taxon>Salmoninae</taxon>
        <taxon>Oncorhynchus</taxon>
    </lineage>
</organism>
<reference key="1">
    <citation type="journal article" date="1992" name="Biochem. J.">
        <title>Amino acid sequence of band-3 protein from rainbow trout erythrocytes derived from cDNA.</title>
        <authorList>
            <person name="Hubner S."/>
            <person name="Michel F."/>
            <person name="Rudloff V."/>
            <person name="Appelhans H."/>
        </authorList>
    </citation>
    <scope>NUCLEOTIDE SEQUENCE [MRNA]</scope>
</reference>
<accession>P32847</accession>
<dbReference type="EMBL" id="X61699">
    <property type="protein sequence ID" value="CAA43868.1"/>
    <property type="molecule type" value="mRNA"/>
</dbReference>
<dbReference type="PIR" id="S24318">
    <property type="entry name" value="S24318"/>
</dbReference>
<dbReference type="RefSeq" id="NP_001118189.1">
    <property type="nucleotide sequence ID" value="NM_001124717.1"/>
</dbReference>
<dbReference type="SMR" id="P32847"/>
<dbReference type="TCDB" id="2.A.31.1.4">
    <property type="family name" value="the anion exchanger (ae) family"/>
</dbReference>
<dbReference type="GlyCosmos" id="P32847">
    <property type="glycosylation" value="2 sites, No reported glycans"/>
</dbReference>
<dbReference type="GeneID" id="100136769"/>
<dbReference type="KEGG" id="omy:100136769"/>
<dbReference type="OrthoDB" id="1735926at2759"/>
<dbReference type="Proteomes" id="UP000694395">
    <property type="component" value="Unplaced"/>
</dbReference>
<dbReference type="GO" id="GO:0016323">
    <property type="term" value="C:basolateral plasma membrane"/>
    <property type="evidence" value="ECO:0007669"/>
    <property type="project" value="TreeGrafter"/>
</dbReference>
<dbReference type="GO" id="GO:0005886">
    <property type="term" value="C:plasma membrane"/>
    <property type="evidence" value="ECO:0000250"/>
    <property type="project" value="UniProtKB"/>
</dbReference>
<dbReference type="GO" id="GO:0015106">
    <property type="term" value="F:bicarbonate transmembrane transporter activity"/>
    <property type="evidence" value="ECO:0000250"/>
    <property type="project" value="UniProtKB"/>
</dbReference>
<dbReference type="GO" id="GO:0140900">
    <property type="term" value="F:chloride:bicarbonate antiporter activity"/>
    <property type="evidence" value="ECO:0000250"/>
    <property type="project" value="UniProtKB"/>
</dbReference>
<dbReference type="GO" id="GO:0005452">
    <property type="term" value="F:solute:inorganic anion antiporter activity"/>
    <property type="evidence" value="ECO:0000250"/>
    <property type="project" value="UniProtKB"/>
</dbReference>
<dbReference type="GO" id="GO:0015701">
    <property type="term" value="P:bicarbonate transport"/>
    <property type="evidence" value="ECO:0000250"/>
    <property type="project" value="UniProtKB"/>
</dbReference>
<dbReference type="GO" id="GO:0051453">
    <property type="term" value="P:regulation of intracellular pH"/>
    <property type="evidence" value="ECO:0007669"/>
    <property type="project" value="TreeGrafter"/>
</dbReference>
<dbReference type="FunFam" id="1.10.287.570:FF:000001">
    <property type="entry name" value="Anion exchange protein"/>
    <property type="match status" value="1"/>
</dbReference>
<dbReference type="FunFam" id="3.40.930.10:FF:000020">
    <property type="entry name" value="Anion exchange protein"/>
    <property type="match status" value="1"/>
</dbReference>
<dbReference type="Gene3D" id="1.10.287.570">
    <property type="entry name" value="Helical hairpin bin"/>
    <property type="match status" value="1"/>
</dbReference>
<dbReference type="Gene3D" id="3.40.930.10">
    <property type="entry name" value="Mannitol-specific EII, Chain A"/>
    <property type="match status" value="1"/>
</dbReference>
<dbReference type="InterPro" id="IPR001717">
    <property type="entry name" value="Anion_exchange"/>
</dbReference>
<dbReference type="InterPro" id="IPR002977">
    <property type="entry name" value="Anion_exchange_1"/>
</dbReference>
<dbReference type="InterPro" id="IPR018241">
    <property type="entry name" value="Anion_exchange_CS"/>
</dbReference>
<dbReference type="InterPro" id="IPR013769">
    <property type="entry name" value="Band3_cytoplasmic_dom"/>
</dbReference>
<dbReference type="InterPro" id="IPR011531">
    <property type="entry name" value="HCO3_transpt-like_TM_dom"/>
</dbReference>
<dbReference type="InterPro" id="IPR003020">
    <property type="entry name" value="HCO3_transpt_euk"/>
</dbReference>
<dbReference type="InterPro" id="IPR016152">
    <property type="entry name" value="PTrfase/Anion_transptr"/>
</dbReference>
<dbReference type="NCBIfam" id="TIGR00834">
    <property type="entry name" value="ae"/>
    <property type="match status" value="1"/>
</dbReference>
<dbReference type="PANTHER" id="PTHR11453">
    <property type="entry name" value="ANION EXCHANGE PROTEIN"/>
    <property type="match status" value="1"/>
</dbReference>
<dbReference type="PANTHER" id="PTHR11453:SF12">
    <property type="entry name" value="BAND 3 ANION TRANSPORT PROTEIN"/>
    <property type="match status" value="1"/>
</dbReference>
<dbReference type="Pfam" id="PF07565">
    <property type="entry name" value="Band_3_cyto"/>
    <property type="match status" value="2"/>
</dbReference>
<dbReference type="Pfam" id="PF00955">
    <property type="entry name" value="HCO3_cotransp"/>
    <property type="match status" value="1"/>
</dbReference>
<dbReference type="PRINTS" id="PR00165">
    <property type="entry name" value="ANIONEXCHNGR"/>
</dbReference>
<dbReference type="PRINTS" id="PR01187">
    <property type="entry name" value="ANIONEXHNGR1"/>
</dbReference>
<dbReference type="PRINTS" id="PR01231">
    <property type="entry name" value="HCO3TRNSPORT"/>
</dbReference>
<dbReference type="SUPFAM" id="SSF55804">
    <property type="entry name" value="Phoshotransferase/anion transport protein"/>
    <property type="match status" value="1"/>
</dbReference>
<dbReference type="PROSITE" id="PS00219">
    <property type="entry name" value="ANION_EXCHANGER_1"/>
    <property type="match status" value="1"/>
</dbReference>
<dbReference type="PROSITE" id="PS00220">
    <property type="entry name" value="ANION_EXCHANGER_2"/>
    <property type="match status" value="1"/>
</dbReference>
<evidence type="ECO:0000250" key="1"/>
<evidence type="ECO:0000250" key="2">
    <source>
        <dbReference type="UniProtKB" id="P02730"/>
    </source>
</evidence>
<evidence type="ECO:0000255" key="3"/>
<evidence type="ECO:0000256" key="4">
    <source>
        <dbReference type="SAM" id="MobiDB-lite"/>
    </source>
</evidence>
<evidence type="ECO:0000305" key="5"/>
<sequence>MENDLSFGEDVMSYEEESDSAFPSPIRPTPPGHSGNYDLEQSRQEEDSNQAIQSIVVHTDPEAYLNLNTNANTRGDAQAYVELNELMGNSWQETGRWVGYEENFNPGTGKWGPSHVSYLTFKSLIQLRKIMSTGAIILDLQASSLSAVAEKVVDELRTKGEIRAADRDGLLRALLQRRSQSEGAVAQPLGGDIEMQTFSVTKQRDTTDSVEASIVLSGVMDSLEKPAVAFVRLGDSVVIEGALEAPVPVRFVFVLVGPSQGGVDYHESGRAMAALMADWVFSLEAYLAPTNKELTNAIADFMDCGIVIPPTEIQDEGMLQPIIDFQKKMLKDRLRPSDTRIIFGGGAKADEADEEPREDPLARTGIPFGGMIKDMKRRYRHYISDFTDALDPQVLAAVIFIYFAALSPAITFGGLLADKTEHMMGVSELMISTCVQGIIFAFIAAQPTLVIGFSGPLLVFEEAFFAFCKSQEIEYIVGRIWVGLWLVIIVVVIVAVEGSFLVKFISRFTQEIFSILISLIFIYETFSKLGKIFKAHPLVLNYEHLNDSLDNPFHPVVKEHIEYHEDGNKTVHEVIHERAYPNTALLSMCLMFGCFFIAYFLRQFKNGHFLPGPIRRMIGDFGVPIAIFFMIAVDITIEDAYTQKLVVPKGLMVSNPNARGWFINPLGEKKPFPAWMMGACCVPALLVFILIFLESQITTLIVSKPERKMVKGSGFHLDLLILVTMGGIASLFGVPWLSAATVRSVTHANALTVMSKGPKPEIEKVLEQRISGMLVAAMVGVSILLEPILKMIPMTALFGIFLYMGITSLSGIQMWDRMLLLIVPRKYYPADAYAQRVTTMKMHLFTLIQMVCLGALWMVKMSAFSLALPFVLILTIPLRMAITGTLFTDKEMKCLDASDGKVKFEEEPGEDMYESPLP</sequence>
<comment type="function">
    <text evidence="2">Functions both as a transporter that mediates electroneutral anion exchange across the cell membrane and as a structural protein. Major integral membrane glycoprotein of the erythrocyte membrane; required for normal flexibility and stability of the erythrocyte membrane and for normal erythrocyte shape via the interactions of its cytoplasmic domain with cytoskeletal proteins, glycolytic enzymes, and hemoglobin. Functions as a transporter that mediates the 1:1 exchange of inorganic anions across the erythrocyte membrane. Mediates chloride-bicarbonate exchange in the kidney, and is required for normal acidification of the urine.</text>
</comment>
<comment type="catalytic activity">
    <reaction evidence="2">
        <text>hydrogencarbonate(in) + chloride(out) = hydrogencarbonate(out) + chloride(in)</text>
        <dbReference type="Rhea" id="RHEA:72363"/>
        <dbReference type="ChEBI" id="CHEBI:17544"/>
        <dbReference type="ChEBI" id="CHEBI:17996"/>
    </reaction>
</comment>
<comment type="subunit">
    <text evidence="2">A dimer in solution, it spans the membrane asymmetrically and appears to be tetrameric.</text>
</comment>
<comment type="subcellular location">
    <subcellularLocation>
        <location evidence="2">Cell membrane</location>
        <topology evidence="2">Multi-pass membrane protein</topology>
    </subcellularLocation>
</comment>
<comment type="similarity">
    <text evidence="5">Belongs to the anion exchanger (TC 2.A.31) family.</text>
</comment>
<feature type="chain" id="PRO_0000079213" description="Band 3 anion exchange protein">
    <location>
        <begin position="1"/>
        <end position="918"/>
    </location>
</feature>
<feature type="topological domain" description="Cytoplasmic" evidence="2">
    <location>
        <begin position="1"/>
        <end position="392"/>
    </location>
</feature>
<feature type="transmembrane region" description="Helical; Name=1" evidence="2">
    <location>
        <begin position="393"/>
        <end position="416"/>
    </location>
</feature>
<feature type="topological domain" description="Extracellular" evidence="2">
    <location>
        <begin position="417"/>
        <end position="424"/>
    </location>
</feature>
<feature type="transmembrane region" description="Helical; Name=2" evidence="2">
    <location>
        <begin position="425"/>
        <end position="445"/>
    </location>
</feature>
<feature type="topological domain" description="Cytoplasmic" evidence="2">
    <location>
        <begin position="446"/>
        <end position="448"/>
    </location>
</feature>
<feature type="transmembrane region" description="Discontinuously helical; Name=3" evidence="2">
    <location>
        <begin position="449"/>
        <end position="465"/>
    </location>
</feature>
<feature type="topological domain" description="Extracellular" evidence="2">
    <location>
        <begin position="466"/>
        <end position="474"/>
    </location>
</feature>
<feature type="transmembrane region" description="Helical; Name=4" evidence="2">
    <location>
        <begin position="475"/>
        <end position="495"/>
    </location>
</feature>
<feature type="topological domain" description="Cytoplasmic" evidence="2">
    <location>
        <begin position="496"/>
        <end position="507"/>
    </location>
</feature>
<feature type="transmembrane region" description="Helical; Name=5" evidence="2">
    <location>
        <begin position="508"/>
        <end position="530"/>
    </location>
</feature>
<feature type="topological domain" description="Extracellular" evidence="2">
    <location>
        <begin position="531"/>
        <end position="583"/>
    </location>
</feature>
<feature type="transmembrane region" description="Helical; Name=6" evidence="2">
    <location>
        <begin position="584"/>
        <end position="604"/>
    </location>
</feature>
<feature type="topological domain" description="Cytoplasmic" evidence="2">
    <location>
        <begin position="605"/>
        <end position="615"/>
    </location>
</feature>
<feature type="transmembrane region" description="Helical; Name=7" evidence="2">
    <location>
        <begin position="616"/>
        <end position="636"/>
    </location>
</feature>
<feature type="topological domain" description="Extracellular" evidence="2">
    <location>
        <begin position="637"/>
        <end position="676"/>
    </location>
</feature>
<feature type="transmembrane region" description="Helical; Name=8" evidence="2">
    <location>
        <begin position="677"/>
        <end position="697"/>
    </location>
</feature>
<feature type="topological domain" description="Cytoplasmic" evidence="2">
    <location>
        <begin position="698"/>
        <end position="713"/>
    </location>
</feature>
<feature type="transmembrane region" description="Helical; Name=9" evidence="2">
    <location>
        <begin position="714"/>
        <end position="732"/>
    </location>
</feature>
<feature type="transmembrane region" description="Discontinuously helical; Name=10" evidence="2">
    <location>
        <begin position="733"/>
        <end position="750"/>
    </location>
</feature>
<feature type="topological domain" description="Cytoplasmic" evidence="2">
    <location>
        <begin position="751"/>
        <end position="769"/>
    </location>
</feature>
<feature type="transmembrane region" description="Helical; Name=11" evidence="2">
    <location>
        <begin position="770"/>
        <end position="790"/>
    </location>
</feature>
<feature type="transmembrane region" description="Helical; Name=12" evidence="2">
    <location>
        <begin position="791"/>
        <end position="809"/>
    </location>
</feature>
<feature type="topological domain" description="Cytoplasmic" evidence="2">
    <location>
        <begin position="810"/>
        <end position="847"/>
    </location>
</feature>
<feature type="intramembrane region" description="Discontinuously helical" evidence="2">
    <location>
        <begin position="848"/>
        <end position="878"/>
    </location>
</feature>
<feature type="topological domain" description="Cytoplasmic" evidence="2">
    <location>
        <begin position="879"/>
        <end position="918"/>
    </location>
</feature>
<feature type="region of interest" description="Disordered" evidence="4">
    <location>
        <begin position="1"/>
        <end position="48"/>
    </location>
</feature>
<feature type="lipid moiety-binding region" description="S-palmitoyl cysteine" evidence="1">
    <location>
        <position position="852"/>
    </location>
</feature>
<feature type="glycosylation site" description="N-linked (GlcNAc...) asparagine" evidence="3">
    <location>
        <position position="546"/>
    </location>
</feature>
<feature type="glycosylation site" description="N-linked (GlcNAc...) asparagine" evidence="3">
    <location>
        <position position="568"/>
    </location>
</feature>
<keyword id="KW-0039">Anion exchange</keyword>
<keyword id="KW-1003">Cell membrane</keyword>
<keyword id="KW-0325">Glycoprotein</keyword>
<keyword id="KW-0406">Ion transport</keyword>
<keyword id="KW-0449">Lipoprotein</keyword>
<keyword id="KW-0472">Membrane</keyword>
<keyword id="KW-0564">Palmitate</keyword>
<keyword id="KW-0812">Transmembrane</keyword>
<keyword id="KW-1133">Transmembrane helix</keyword>
<keyword id="KW-0813">Transport</keyword>
<gene>
    <name type="primary">slc4a1</name>
    <name type="synonym">ae1</name>
</gene>
<protein>
    <recommendedName>
        <fullName>Band 3 anion exchange protein</fullName>
    </recommendedName>
    <alternativeName>
        <fullName>Anion exchange protein 1</fullName>
        <shortName>AE 1</shortName>
        <shortName>Anion exchanger 1</shortName>
    </alternativeName>
    <alternativeName>
        <fullName>Solute carrier family 4 member 1</fullName>
    </alternativeName>
</protein>
<proteinExistence type="evidence at transcript level"/>